<evidence type="ECO:0000255" key="1">
    <source>
        <dbReference type="HAMAP-Rule" id="MF_00718"/>
    </source>
</evidence>
<evidence type="ECO:0000305" key="2"/>
<comment type="subunit">
    <text evidence="1">Homodimer.</text>
</comment>
<comment type="subcellular location">
    <subcellularLocation>
        <location evidence="1">Cytoplasm</location>
    </subcellularLocation>
</comment>
<comment type="similarity">
    <text evidence="1">Belongs to the 4-oxalocrotonate tautomerase family. PptA subfamily.</text>
</comment>
<comment type="sequence caution" evidence="2">
    <conflict type="erroneous initiation">
        <sequence resource="EMBL-CDS" id="ABU77127"/>
    </conflict>
</comment>
<gene>
    <name evidence="1" type="primary">pptA</name>
    <name type="ordered locus">ESA_01873</name>
</gene>
<protein>
    <recommendedName>
        <fullName evidence="1">Tautomerase PptA</fullName>
        <ecNumber evidence="1">5.3.2.-</ecNumber>
    </recommendedName>
</protein>
<feature type="initiator methionine" description="Removed" evidence="1">
    <location>
        <position position="1"/>
    </location>
</feature>
<feature type="chain" id="PRO_0000348337" description="Tautomerase PptA">
    <location>
        <begin position="2"/>
        <end position="76"/>
    </location>
</feature>
<feature type="active site" description="Proton acceptor; via imino nitrogen" evidence="1">
    <location>
        <position position="2"/>
    </location>
</feature>
<reference key="1">
    <citation type="journal article" date="2010" name="PLoS ONE">
        <title>Genome sequence of Cronobacter sakazakii BAA-894 and comparative genomic hybridization analysis with other Cronobacter species.</title>
        <authorList>
            <person name="Kucerova E."/>
            <person name="Clifton S.W."/>
            <person name="Xia X.Q."/>
            <person name="Long F."/>
            <person name="Porwollik S."/>
            <person name="Fulton L."/>
            <person name="Fronick C."/>
            <person name="Minx P."/>
            <person name="Kyung K."/>
            <person name="Warren W."/>
            <person name="Fulton R."/>
            <person name="Feng D."/>
            <person name="Wollam A."/>
            <person name="Shah N."/>
            <person name="Bhonagiri V."/>
            <person name="Nash W.E."/>
            <person name="Hallsworth-Pepin K."/>
            <person name="Wilson R.K."/>
            <person name="McClelland M."/>
            <person name="Forsythe S.J."/>
        </authorList>
    </citation>
    <scope>NUCLEOTIDE SEQUENCE [LARGE SCALE GENOMIC DNA]</scope>
    <source>
        <strain>ATCC BAA-894</strain>
    </source>
</reference>
<proteinExistence type="inferred from homology"/>
<accession>A7MK78</accession>
<dbReference type="EC" id="5.3.2.-" evidence="1"/>
<dbReference type="EMBL" id="CP000783">
    <property type="protein sequence ID" value="ABU77127.1"/>
    <property type="status" value="ALT_INIT"/>
    <property type="molecule type" value="Genomic_DNA"/>
</dbReference>
<dbReference type="RefSeq" id="WP_007867731.1">
    <property type="nucleotide sequence ID" value="NC_009778.1"/>
</dbReference>
<dbReference type="SMR" id="A7MK78"/>
<dbReference type="KEGG" id="esa:ESA_01873"/>
<dbReference type="HOGENOM" id="CLU_183611_0_1_6"/>
<dbReference type="Proteomes" id="UP000000260">
    <property type="component" value="Chromosome"/>
</dbReference>
<dbReference type="GO" id="GO:0005737">
    <property type="term" value="C:cytoplasm"/>
    <property type="evidence" value="ECO:0007669"/>
    <property type="project" value="UniProtKB-SubCell"/>
</dbReference>
<dbReference type="GO" id="GO:0016862">
    <property type="term" value="F:intramolecular oxidoreductase activity, interconverting keto- and enol-groups"/>
    <property type="evidence" value="ECO:0007669"/>
    <property type="project" value="UniProtKB-UniRule"/>
</dbReference>
<dbReference type="Gene3D" id="3.30.429.10">
    <property type="entry name" value="Macrophage Migration Inhibitory Factor"/>
    <property type="match status" value="1"/>
</dbReference>
<dbReference type="HAMAP" id="MF_00718">
    <property type="entry name" value="Tautomerase_PptA"/>
    <property type="match status" value="1"/>
</dbReference>
<dbReference type="InterPro" id="IPR004370">
    <property type="entry name" value="4-OT-like_dom"/>
</dbReference>
<dbReference type="InterPro" id="IPR014347">
    <property type="entry name" value="Tautomerase/MIF_sf"/>
</dbReference>
<dbReference type="InterPro" id="IPR017284">
    <property type="entry name" value="Tautomerase_PptA"/>
</dbReference>
<dbReference type="NCBIfam" id="NF002324">
    <property type="entry name" value="PRK01271.1"/>
    <property type="match status" value="1"/>
</dbReference>
<dbReference type="Pfam" id="PF01361">
    <property type="entry name" value="Tautomerase"/>
    <property type="match status" value="1"/>
</dbReference>
<dbReference type="PIRSF" id="PIRSF037799">
    <property type="entry name" value="Tautomer_YdcE_prd"/>
    <property type="match status" value="1"/>
</dbReference>
<dbReference type="SUPFAM" id="SSF55331">
    <property type="entry name" value="Tautomerase/MIF"/>
    <property type="match status" value="1"/>
</dbReference>
<sequence length="76" mass="8706">MPHIDVKFFPRDLSDAQQQALADELTQVIVKHLQSKESSVSVALKEVQPEQWKSEVWDTEIAPQLDTLARKPGYEM</sequence>
<organism>
    <name type="scientific">Cronobacter sakazakii (strain ATCC BAA-894)</name>
    <name type="common">Enterobacter sakazakii</name>
    <dbReference type="NCBI Taxonomy" id="290339"/>
    <lineage>
        <taxon>Bacteria</taxon>
        <taxon>Pseudomonadati</taxon>
        <taxon>Pseudomonadota</taxon>
        <taxon>Gammaproteobacteria</taxon>
        <taxon>Enterobacterales</taxon>
        <taxon>Enterobacteriaceae</taxon>
        <taxon>Cronobacter</taxon>
    </lineage>
</organism>
<name>PPTA_CROS8</name>
<keyword id="KW-0963">Cytoplasm</keyword>
<keyword id="KW-0413">Isomerase</keyword>
<keyword id="KW-1185">Reference proteome</keyword>